<proteinExistence type="predicted"/>
<comment type="pathway">
    <text>Glycan metabolism; exopolysaccharide biosynthesis.</text>
</comment>
<comment type="sequence caution" evidence="1">
    <conflict type="erroneous initiation">
        <sequence resource="EMBL-CDS" id="AAA16052"/>
    </conflict>
</comment>
<feature type="chain" id="PRO_0000087135" description="Succinoglycan biosynthesis protein ExoV">
    <location>
        <begin position="1"/>
        <end position="316"/>
    </location>
</feature>
<sequence>MKPYYWESQHGNFGDDLNLWLWDFLLPGFREVYPETLLVGVGTVLNRALLPKATHKLVIGSGFGYGTLPDMSDPKEWDIRSVRGPLTAAKVGVAPELGIIDPAVMVADLPEFQGLRKIYKRSFVPHWESAIAGLWPAICDAVGLNYIDPRGEAKDVIRKIGQSELIVAESMHGAILADAFRVPWTAVSTSHSINSFKWNDWAQTLGVTYRPRRVPVSTRAEAMIKGARFWGMDFQAKEPQPEDPNRRQIDGDLAVAEREPRQTSLRAAAKRALAAPATLALWQASRAAPQLSKDSALAERKERFRTVLDGIRRDYF</sequence>
<gene>
    <name type="primary">exoV</name>
    <name type="ordered locus">RB1072</name>
    <name type="ORF">SMb20949</name>
</gene>
<keyword id="KW-0270">Exopolysaccharide synthesis</keyword>
<keyword id="KW-0614">Plasmid</keyword>
<keyword id="KW-1185">Reference proteome</keyword>
<dbReference type="EMBL" id="L20758">
    <property type="protein sequence ID" value="AAA16052.1"/>
    <property type="status" value="ALT_INIT"/>
    <property type="molecule type" value="Unassigned_DNA"/>
</dbReference>
<dbReference type="EMBL" id="Z22646">
    <property type="protein sequence ID" value="CAA80360.1"/>
    <property type="molecule type" value="Genomic_DNA"/>
</dbReference>
<dbReference type="EMBL" id="AL591985">
    <property type="protein sequence ID" value="CAC49472.1"/>
    <property type="molecule type" value="Genomic_DNA"/>
</dbReference>
<dbReference type="PIR" id="A49349">
    <property type="entry name" value="A49349"/>
</dbReference>
<dbReference type="PIR" id="H95975">
    <property type="entry name" value="H95975"/>
</dbReference>
<dbReference type="RefSeq" id="NP_437612.1">
    <property type="nucleotide sequence ID" value="NC_003078.1"/>
</dbReference>
<dbReference type="RefSeq" id="WP_010975910.1">
    <property type="nucleotide sequence ID" value="NC_003078.1"/>
</dbReference>
<dbReference type="EnsemblBacteria" id="CAC49472">
    <property type="protein sequence ID" value="CAC49472"/>
    <property type="gene ID" value="SM_b20949"/>
</dbReference>
<dbReference type="KEGG" id="sme:SM_b20949"/>
<dbReference type="PATRIC" id="fig|266834.11.peg.6001"/>
<dbReference type="eggNOG" id="COG2327">
    <property type="taxonomic scope" value="Bacteria"/>
</dbReference>
<dbReference type="HOGENOM" id="CLU_064297_0_0_5"/>
<dbReference type="OrthoDB" id="9803627at2"/>
<dbReference type="BioCyc" id="MetaCyc:SM_B20949-MONOMER"/>
<dbReference type="UniPathway" id="UPA00631"/>
<dbReference type="Proteomes" id="UP000001976">
    <property type="component" value="Plasmid pSymB"/>
</dbReference>
<dbReference type="GO" id="GO:0000271">
    <property type="term" value="P:polysaccharide biosynthetic process"/>
    <property type="evidence" value="ECO:0007669"/>
    <property type="project" value="UniProtKB-KW"/>
</dbReference>
<dbReference type="InterPro" id="IPR007345">
    <property type="entry name" value="Polysacch_pyruvyl_Trfase"/>
</dbReference>
<dbReference type="Pfam" id="PF04230">
    <property type="entry name" value="PS_pyruv_trans"/>
    <property type="match status" value="1"/>
</dbReference>
<reference key="1">
    <citation type="journal article" date="1993" name="J. Bacteriol.">
        <title>Family of glycosyl transferases needed for the synthesis of succinoglycan by Rhizobium meliloti.</title>
        <authorList>
            <person name="Glucksmann M.A."/>
            <person name="Reuber T.L."/>
            <person name="Walker G.C."/>
        </authorList>
    </citation>
    <scope>NUCLEOTIDE SEQUENCE [GENOMIC DNA]</scope>
    <source>
        <strain>1021</strain>
    </source>
</reference>
<reference key="2">
    <citation type="journal article" date="1993" name="J. Bacteriol.">
        <title>Genes needed for the modification, polymerization, export, and processing of succinoglycan by Rhizobium meliloti: a model for succinoglycan biosynthesis.</title>
        <authorList>
            <person name="Glucksmann M.A."/>
            <person name="Reuber T.L."/>
            <person name="Walker G.C."/>
        </authorList>
    </citation>
    <scope>NUCLEOTIDE SEQUENCE [GENOMIC DNA]</scope>
    <source>
        <strain>1021</strain>
    </source>
</reference>
<reference key="3">
    <citation type="journal article" date="1993" name="Mol. Plant Microbe Interact.">
        <title>Analysis of the Rhizobium meliloti genes exoU, exoV, exoW, exoT, and exoI involved in exopolysaccharide biosynthesis and nodule invasion: exoU and exoW probably encode glucosyltransferases.</title>
        <authorList>
            <person name="Becker A."/>
            <person name="Kleickmann A."/>
            <person name="Kuester H."/>
            <person name="Keller M."/>
            <person name="Arnold W."/>
            <person name="Puehler A."/>
        </authorList>
    </citation>
    <scope>NUCLEOTIDE SEQUENCE [GENOMIC DNA]</scope>
    <source>
        <strain>RCR2011 / SU47</strain>
    </source>
</reference>
<reference key="4">
    <citation type="journal article" date="2001" name="Proc. Natl. Acad. Sci. U.S.A.">
        <title>The complete sequence of the 1,683-kb pSymB megaplasmid from the N2-fixing endosymbiont Sinorhizobium meliloti.</title>
        <authorList>
            <person name="Finan T.M."/>
            <person name="Weidner S."/>
            <person name="Wong K."/>
            <person name="Buhrmester J."/>
            <person name="Chain P."/>
            <person name="Vorhoelter F.J."/>
            <person name="Hernandez-Lucas I."/>
            <person name="Becker A."/>
            <person name="Cowie A."/>
            <person name="Gouzy J."/>
            <person name="Golding B."/>
            <person name="Puehler A."/>
        </authorList>
    </citation>
    <scope>NUCLEOTIDE SEQUENCE [LARGE SCALE GENOMIC DNA]</scope>
    <source>
        <strain>1021</strain>
    </source>
</reference>
<reference key="5">
    <citation type="journal article" date="2001" name="Science">
        <title>The composite genome of the legume symbiont Sinorhizobium meliloti.</title>
        <authorList>
            <person name="Galibert F."/>
            <person name="Finan T.M."/>
            <person name="Long S.R."/>
            <person name="Puehler A."/>
            <person name="Abola P."/>
            <person name="Ampe F."/>
            <person name="Barloy-Hubler F."/>
            <person name="Barnett M.J."/>
            <person name="Becker A."/>
            <person name="Boistard P."/>
            <person name="Bothe G."/>
            <person name="Boutry M."/>
            <person name="Bowser L."/>
            <person name="Buhrmester J."/>
            <person name="Cadieu E."/>
            <person name="Capela D."/>
            <person name="Chain P."/>
            <person name="Cowie A."/>
            <person name="Davis R.W."/>
            <person name="Dreano S."/>
            <person name="Federspiel N.A."/>
            <person name="Fisher R.F."/>
            <person name="Gloux S."/>
            <person name="Godrie T."/>
            <person name="Goffeau A."/>
            <person name="Golding B."/>
            <person name="Gouzy J."/>
            <person name="Gurjal M."/>
            <person name="Hernandez-Lucas I."/>
            <person name="Hong A."/>
            <person name="Huizar L."/>
            <person name="Hyman R.W."/>
            <person name="Jones T."/>
            <person name="Kahn D."/>
            <person name="Kahn M.L."/>
            <person name="Kalman S."/>
            <person name="Keating D.H."/>
            <person name="Kiss E."/>
            <person name="Komp C."/>
            <person name="Lelaure V."/>
            <person name="Masuy D."/>
            <person name="Palm C."/>
            <person name="Peck M.C."/>
            <person name="Pohl T.M."/>
            <person name="Portetelle D."/>
            <person name="Purnelle B."/>
            <person name="Ramsperger U."/>
            <person name="Surzycki R."/>
            <person name="Thebault P."/>
            <person name="Vandenbol M."/>
            <person name="Vorhoelter F.J."/>
            <person name="Weidner S."/>
            <person name="Wells D.H."/>
            <person name="Wong K."/>
            <person name="Yeh K.-C."/>
            <person name="Batut J."/>
        </authorList>
    </citation>
    <scope>NUCLEOTIDE SEQUENCE [LARGE SCALE GENOMIC DNA]</scope>
    <source>
        <strain>1021</strain>
    </source>
</reference>
<name>EXOV_RHIME</name>
<geneLocation type="plasmid">
    <name>pSymB</name>
    <name>megaplasmid 2</name>
</geneLocation>
<evidence type="ECO:0000305" key="1"/>
<protein>
    <recommendedName>
        <fullName>Succinoglycan biosynthesis protein ExoV</fullName>
    </recommendedName>
</protein>
<accession>P33701</accession>
<organism>
    <name type="scientific">Rhizobium meliloti (strain 1021)</name>
    <name type="common">Ensifer meliloti</name>
    <name type="synonym">Sinorhizobium meliloti</name>
    <dbReference type="NCBI Taxonomy" id="266834"/>
    <lineage>
        <taxon>Bacteria</taxon>
        <taxon>Pseudomonadati</taxon>
        <taxon>Pseudomonadota</taxon>
        <taxon>Alphaproteobacteria</taxon>
        <taxon>Hyphomicrobiales</taxon>
        <taxon>Rhizobiaceae</taxon>
        <taxon>Sinorhizobium/Ensifer group</taxon>
        <taxon>Sinorhizobium</taxon>
    </lineage>
</organism>